<sequence>MHQPVMLEETIAMLKPHAKGRYLDGTVGLGGHSFAILQSAGDGAELCGLDQDKKALAIAEMTLKPFKKRVHLVHTKYSSFPLILKALGWKLLDGALIDIGVSSLQLDNAERGFSFLYDGPLDMRMDQDANNNSLFEIVNKSRQEYLKDIISRYGEEPQANRIAKAIVQKRRTKPITTTKELADLIEQAYPAAWRAKSRHHPATKTFQAFRIVVNSELNELEKFLNMIMGWIAPGGRVAVISFHSLEDRIVKQYMKSWTRSCICPPYVPVCKCFHKPEAILITKKPIRPSEKEISENIRSRSAKLRVAEKVLL</sequence>
<proteinExistence type="inferred from homology"/>
<gene>
    <name evidence="1" type="primary">rsmH</name>
    <name type="synonym">mraW</name>
    <name type="ordered locus">LI1097</name>
</gene>
<comment type="function">
    <text evidence="1">Specifically methylates the N4 position of cytidine in position 1402 (C1402) of 16S rRNA.</text>
</comment>
<comment type="catalytic activity">
    <reaction evidence="1">
        <text>cytidine(1402) in 16S rRNA + S-adenosyl-L-methionine = N(4)-methylcytidine(1402) in 16S rRNA + S-adenosyl-L-homocysteine + H(+)</text>
        <dbReference type="Rhea" id="RHEA:42928"/>
        <dbReference type="Rhea" id="RHEA-COMP:10286"/>
        <dbReference type="Rhea" id="RHEA-COMP:10287"/>
        <dbReference type="ChEBI" id="CHEBI:15378"/>
        <dbReference type="ChEBI" id="CHEBI:57856"/>
        <dbReference type="ChEBI" id="CHEBI:59789"/>
        <dbReference type="ChEBI" id="CHEBI:74506"/>
        <dbReference type="ChEBI" id="CHEBI:82748"/>
        <dbReference type="EC" id="2.1.1.199"/>
    </reaction>
</comment>
<comment type="subcellular location">
    <subcellularLocation>
        <location evidence="1">Cytoplasm</location>
    </subcellularLocation>
</comment>
<comment type="similarity">
    <text evidence="1">Belongs to the methyltransferase superfamily. RsmH family.</text>
</comment>
<feature type="chain" id="PRO_0000318875" description="Ribosomal RNA small subunit methyltransferase H">
    <location>
        <begin position="1"/>
        <end position="312"/>
    </location>
</feature>
<feature type="binding site" evidence="1">
    <location>
        <begin position="30"/>
        <end position="32"/>
    </location>
    <ligand>
        <name>S-adenosyl-L-methionine</name>
        <dbReference type="ChEBI" id="CHEBI:59789"/>
    </ligand>
</feature>
<feature type="binding site" evidence="1">
    <location>
        <position position="50"/>
    </location>
    <ligand>
        <name>S-adenosyl-L-methionine</name>
        <dbReference type="ChEBI" id="CHEBI:59789"/>
    </ligand>
</feature>
<feature type="binding site" evidence="1">
    <location>
        <position position="80"/>
    </location>
    <ligand>
        <name>S-adenosyl-L-methionine</name>
        <dbReference type="ChEBI" id="CHEBI:59789"/>
    </ligand>
</feature>
<feature type="binding site" evidence="1">
    <location>
        <position position="98"/>
    </location>
    <ligand>
        <name>S-adenosyl-L-methionine</name>
        <dbReference type="ChEBI" id="CHEBI:59789"/>
    </ligand>
</feature>
<feature type="binding site" evidence="1">
    <location>
        <position position="105"/>
    </location>
    <ligand>
        <name>S-adenosyl-L-methionine</name>
        <dbReference type="ChEBI" id="CHEBI:59789"/>
    </ligand>
</feature>
<accession>Q1MPC6</accession>
<organism>
    <name type="scientific">Lawsonia intracellularis (strain PHE/MN1-00)</name>
    <dbReference type="NCBI Taxonomy" id="363253"/>
    <lineage>
        <taxon>Bacteria</taxon>
        <taxon>Pseudomonadati</taxon>
        <taxon>Thermodesulfobacteriota</taxon>
        <taxon>Desulfovibrionia</taxon>
        <taxon>Desulfovibrionales</taxon>
        <taxon>Desulfovibrionaceae</taxon>
        <taxon>Lawsonia</taxon>
    </lineage>
</organism>
<dbReference type="EC" id="2.1.1.199" evidence="1"/>
<dbReference type="EMBL" id="AM180252">
    <property type="protein sequence ID" value="CAJ55151.1"/>
    <property type="molecule type" value="Genomic_DNA"/>
</dbReference>
<dbReference type="RefSeq" id="WP_011527180.1">
    <property type="nucleotide sequence ID" value="NC_008011.1"/>
</dbReference>
<dbReference type="SMR" id="Q1MPC6"/>
<dbReference type="STRING" id="363253.LI1097"/>
<dbReference type="KEGG" id="lip:LI1097"/>
<dbReference type="eggNOG" id="COG0275">
    <property type="taxonomic scope" value="Bacteria"/>
</dbReference>
<dbReference type="HOGENOM" id="CLU_038422_2_0_7"/>
<dbReference type="OrthoDB" id="9806637at2"/>
<dbReference type="Proteomes" id="UP000002430">
    <property type="component" value="Chromosome"/>
</dbReference>
<dbReference type="GO" id="GO:0005737">
    <property type="term" value="C:cytoplasm"/>
    <property type="evidence" value="ECO:0007669"/>
    <property type="project" value="UniProtKB-SubCell"/>
</dbReference>
<dbReference type="GO" id="GO:0071424">
    <property type="term" value="F:rRNA (cytosine-N4-)-methyltransferase activity"/>
    <property type="evidence" value="ECO:0007669"/>
    <property type="project" value="UniProtKB-UniRule"/>
</dbReference>
<dbReference type="GO" id="GO:0070475">
    <property type="term" value="P:rRNA base methylation"/>
    <property type="evidence" value="ECO:0007669"/>
    <property type="project" value="UniProtKB-UniRule"/>
</dbReference>
<dbReference type="Gene3D" id="1.10.150.170">
    <property type="entry name" value="Putative methyltransferase TM0872, insert domain"/>
    <property type="match status" value="1"/>
</dbReference>
<dbReference type="Gene3D" id="3.40.50.150">
    <property type="entry name" value="Vaccinia Virus protein VP39"/>
    <property type="match status" value="1"/>
</dbReference>
<dbReference type="HAMAP" id="MF_01007">
    <property type="entry name" value="16SrRNA_methyltr_H"/>
    <property type="match status" value="1"/>
</dbReference>
<dbReference type="InterPro" id="IPR002903">
    <property type="entry name" value="RsmH"/>
</dbReference>
<dbReference type="InterPro" id="IPR023397">
    <property type="entry name" value="SAM-dep_MeTrfase_MraW_recog"/>
</dbReference>
<dbReference type="InterPro" id="IPR029063">
    <property type="entry name" value="SAM-dependent_MTases_sf"/>
</dbReference>
<dbReference type="NCBIfam" id="TIGR00006">
    <property type="entry name" value="16S rRNA (cytosine(1402)-N(4))-methyltransferase RsmH"/>
    <property type="match status" value="1"/>
</dbReference>
<dbReference type="PANTHER" id="PTHR11265:SF0">
    <property type="entry name" value="12S RRNA N4-METHYLCYTIDINE METHYLTRANSFERASE"/>
    <property type="match status" value="1"/>
</dbReference>
<dbReference type="PANTHER" id="PTHR11265">
    <property type="entry name" value="S-ADENOSYL-METHYLTRANSFERASE MRAW"/>
    <property type="match status" value="1"/>
</dbReference>
<dbReference type="Pfam" id="PF01795">
    <property type="entry name" value="Methyltransf_5"/>
    <property type="match status" value="1"/>
</dbReference>
<dbReference type="PIRSF" id="PIRSF004486">
    <property type="entry name" value="MraW"/>
    <property type="match status" value="1"/>
</dbReference>
<dbReference type="SUPFAM" id="SSF81799">
    <property type="entry name" value="Putative methyltransferase TM0872, insert domain"/>
    <property type="match status" value="1"/>
</dbReference>
<dbReference type="SUPFAM" id="SSF53335">
    <property type="entry name" value="S-adenosyl-L-methionine-dependent methyltransferases"/>
    <property type="match status" value="1"/>
</dbReference>
<name>RSMH_LAWIP</name>
<evidence type="ECO:0000255" key="1">
    <source>
        <dbReference type="HAMAP-Rule" id="MF_01007"/>
    </source>
</evidence>
<protein>
    <recommendedName>
        <fullName evidence="1">Ribosomal RNA small subunit methyltransferase H</fullName>
        <ecNumber evidence="1">2.1.1.199</ecNumber>
    </recommendedName>
    <alternativeName>
        <fullName evidence="1">16S rRNA m(4)C1402 methyltransferase</fullName>
    </alternativeName>
    <alternativeName>
        <fullName evidence="1">rRNA (cytosine-N(4)-)-methyltransferase RsmH</fullName>
    </alternativeName>
</protein>
<reference key="1">
    <citation type="submission" date="2005-11" db="EMBL/GenBank/DDBJ databases">
        <title>The complete genome sequence of Lawsonia intracellularis: the causative agent of proliferative enteropathy.</title>
        <authorList>
            <person name="Kaur K."/>
            <person name="Zhang Q."/>
            <person name="Beckler D."/>
            <person name="Munir S."/>
            <person name="Li L."/>
            <person name="Kinsley K."/>
            <person name="Herron L."/>
            <person name="Peterson A."/>
            <person name="May B."/>
            <person name="Singh S."/>
            <person name="Gebhart C."/>
            <person name="Kapur V."/>
        </authorList>
    </citation>
    <scope>NUCLEOTIDE SEQUENCE [LARGE SCALE GENOMIC DNA]</scope>
    <source>
        <strain>PHE/MN1-00</strain>
    </source>
</reference>
<keyword id="KW-0963">Cytoplasm</keyword>
<keyword id="KW-0489">Methyltransferase</keyword>
<keyword id="KW-1185">Reference proteome</keyword>
<keyword id="KW-0698">rRNA processing</keyword>
<keyword id="KW-0949">S-adenosyl-L-methionine</keyword>
<keyword id="KW-0808">Transferase</keyword>